<organism>
    <name type="scientific">Yersinia pestis</name>
    <dbReference type="NCBI Taxonomy" id="632"/>
    <lineage>
        <taxon>Bacteria</taxon>
        <taxon>Pseudomonadati</taxon>
        <taxon>Pseudomonadota</taxon>
        <taxon>Gammaproteobacteria</taxon>
        <taxon>Enterobacterales</taxon>
        <taxon>Yersiniaceae</taxon>
        <taxon>Yersinia</taxon>
    </lineage>
</organism>
<keyword id="KW-0131">Cell cycle</keyword>
<keyword id="KW-0132">Cell division</keyword>
<keyword id="KW-0143">Chaperone</keyword>
<keyword id="KW-0963">Cytoplasm</keyword>
<keyword id="KW-0413">Isomerase</keyword>
<keyword id="KW-1185">Reference proteome</keyword>
<keyword id="KW-0697">Rotamase</keyword>
<comment type="function">
    <text evidence="1">Involved in protein export. Acts as a chaperone by maintaining the newly synthesized protein in an open conformation. Functions as a peptidyl-prolyl cis-trans isomerase.</text>
</comment>
<comment type="catalytic activity">
    <reaction evidence="1">
        <text>[protein]-peptidylproline (omega=180) = [protein]-peptidylproline (omega=0)</text>
        <dbReference type="Rhea" id="RHEA:16237"/>
        <dbReference type="Rhea" id="RHEA-COMP:10747"/>
        <dbReference type="Rhea" id="RHEA-COMP:10748"/>
        <dbReference type="ChEBI" id="CHEBI:83833"/>
        <dbReference type="ChEBI" id="CHEBI:83834"/>
        <dbReference type="EC" id="5.2.1.8"/>
    </reaction>
</comment>
<comment type="subcellular location">
    <subcellularLocation>
        <location>Cytoplasm</location>
    </subcellularLocation>
    <text evidence="1">About half TF is bound to the ribosome near the polypeptide exit tunnel while the other half is free in the cytoplasm.</text>
</comment>
<comment type="domain">
    <text evidence="1">Consists of 3 domains; the N-terminus binds the ribosome, the middle domain has PPIase activity, while the C-terminus has intrinsic chaperone activity on its own.</text>
</comment>
<comment type="similarity">
    <text evidence="1">Belongs to the FKBP-type PPIase family. Tig subfamily.</text>
</comment>
<sequence>MQVSVETTQGLGRRVTITVAADSIEKAVKSELVKAAKNVRIDGFRKGHVPMNIVEQRYGASVRQDVLGDLMQRNFVDAIIKEKINPAGAPNYVPGEYKQGEDFTYSVEFEVYPEVELKDLESIEVEKPVVEVNDADVDTMLETLRKQQATWKETDAAATAEDRATLDFTGSIDGEEFEGGKATDFVLAMGQGRMIPGFEEGVIGHKAGEEFTIDVNFPEDYHAENLKGKSAKFAIVLKKVEVRELPELTEEFIKRFGVADGSLAGLRAEVRKNMERELKGAVRNRVKTQAIDGLVSANNIDVPTALVDGEIDVLRRQAAQRFGGNEKQAAELPRELFEEQAKRRVVVGLLLGEVISQHELKADEDRVKALIEEMASAYEDPQEVIEFYSKNKELMNNMRNVALEEQAVETLLAKAKVTEKPTTFSELMNQTTAA</sequence>
<name>TIG_YERPE</name>
<proteinExistence type="inferred from homology"/>
<protein>
    <recommendedName>
        <fullName evidence="1">Trigger factor</fullName>
        <shortName evidence="1">TF</shortName>
        <ecNumber evidence="1">5.2.1.8</ecNumber>
    </recommendedName>
    <alternativeName>
        <fullName evidence="1">PPIase</fullName>
    </alternativeName>
</protein>
<accession>Q8ZC64</accession>
<accession>Q0WCC5</accession>
<reference key="1">
    <citation type="journal article" date="2001" name="Nature">
        <title>Genome sequence of Yersinia pestis, the causative agent of plague.</title>
        <authorList>
            <person name="Parkhill J."/>
            <person name="Wren B.W."/>
            <person name="Thomson N.R."/>
            <person name="Titball R.W."/>
            <person name="Holden M.T.G."/>
            <person name="Prentice M.B."/>
            <person name="Sebaihia M."/>
            <person name="James K.D."/>
            <person name="Churcher C.M."/>
            <person name="Mungall K.L."/>
            <person name="Baker S."/>
            <person name="Basham D."/>
            <person name="Bentley S.D."/>
            <person name="Brooks K."/>
            <person name="Cerdeno-Tarraga A.-M."/>
            <person name="Chillingworth T."/>
            <person name="Cronin A."/>
            <person name="Davies R.M."/>
            <person name="Davis P."/>
            <person name="Dougan G."/>
            <person name="Feltwell T."/>
            <person name="Hamlin N."/>
            <person name="Holroyd S."/>
            <person name="Jagels K."/>
            <person name="Karlyshev A.V."/>
            <person name="Leather S."/>
            <person name="Moule S."/>
            <person name="Oyston P.C.F."/>
            <person name="Quail M.A."/>
            <person name="Rutherford K.M."/>
            <person name="Simmonds M."/>
            <person name="Skelton J."/>
            <person name="Stevens K."/>
            <person name="Whitehead S."/>
            <person name="Barrell B.G."/>
        </authorList>
    </citation>
    <scope>NUCLEOTIDE SEQUENCE [LARGE SCALE GENOMIC DNA]</scope>
    <source>
        <strain>CO-92 / Biovar Orientalis</strain>
    </source>
</reference>
<reference key="2">
    <citation type="journal article" date="2002" name="J. Bacteriol.">
        <title>Genome sequence of Yersinia pestis KIM.</title>
        <authorList>
            <person name="Deng W."/>
            <person name="Burland V."/>
            <person name="Plunkett G. III"/>
            <person name="Boutin A."/>
            <person name="Mayhew G.F."/>
            <person name="Liss P."/>
            <person name="Perna N.T."/>
            <person name="Rose D.J."/>
            <person name="Mau B."/>
            <person name="Zhou S."/>
            <person name="Schwartz D.C."/>
            <person name="Fetherston J.D."/>
            <person name="Lindler L.E."/>
            <person name="Brubaker R.R."/>
            <person name="Plano G.V."/>
            <person name="Straley S.C."/>
            <person name="McDonough K.A."/>
            <person name="Nilles M.L."/>
            <person name="Matson J.S."/>
            <person name="Blattner F.R."/>
            <person name="Perry R.D."/>
        </authorList>
    </citation>
    <scope>NUCLEOTIDE SEQUENCE [LARGE SCALE GENOMIC DNA]</scope>
    <source>
        <strain>KIM10+ / Biovar Mediaevalis</strain>
    </source>
</reference>
<reference key="3">
    <citation type="journal article" date="2004" name="DNA Res.">
        <title>Complete genome sequence of Yersinia pestis strain 91001, an isolate avirulent to humans.</title>
        <authorList>
            <person name="Song Y."/>
            <person name="Tong Z."/>
            <person name="Wang J."/>
            <person name="Wang L."/>
            <person name="Guo Z."/>
            <person name="Han Y."/>
            <person name="Zhang J."/>
            <person name="Pei D."/>
            <person name="Zhou D."/>
            <person name="Qin H."/>
            <person name="Pang X."/>
            <person name="Han Y."/>
            <person name="Zhai J."/>
            <person name="Li M."/>
            <person name="Cui B."/>
            <person name="Qi Z."/>
            <person name="Jin L."/>
            <person name="Dai R."/>
            <person name="Chen F."/>
            <person name="Li S."/>
            <person name="Ye C."/>
            <person name="Du Z."/>
            <person name="Lin W."/>
            <person name="Wang J."/>
            <person name="Yu J."/>
            <person name="Yang H."/>
            <person name="Wang J."/>
            <person name="Huang P."/>
            <person name="Yang R."/>
        </authorList>
    </citation>
    <scope>NUCLEOTIDE SEQUENCE [LARGE SCALE GENOMIC DNA]</scope>
    <source>
        <strain>91001 / Biovar Mediaevalis</strain>
    </source>
</reference>
<evidence type="ECO:0000255" key="1">
    <source>
        <dbReference type="HAMAP-Rule" id="MF_00303"/>
    </source>
</evidence>
<dbReference type="EC" id="5.2.1.8" evidence="1"/>
<dbReference type="EMBL" id="AL590842">
    <property type="protein sequence ID" value="CAL21753.1"/>
    <property type="molecule type" value="Genomic_DNA"/>
</dbReference>
<dbReference type="EMBL" id="AE009952">
    <property type="protein sequence ID" value="AAM84607.1"/>
    <property type="molecule type" value="Genomic_DNA"/>
</dbReference>
<dbReference type="EMBL" id="AE017042">
    <property type="protein sequence ID" value="AAS61038.1"/>
    <property type="molecule type" value="Genomic_DNA"/>
</dbReference>
<dbReference type="PIR" id="AF0383">
    <property type="entry name" value="AF0383"/>
</dbReference>
<dbReference type="RefSeq" id="WP_002208643.1">
    <property type="nucleotide sequence ID" value="NZ_WUCM01000043.1"/>
</dbReference>
<dbReference type="RefSeq" id="YP_002348063.1">
    <property type="nucleotide sequence ID" value="NC_003143.1"/>
</dbReference>
<dbReference type="SMR" id="Q8ZC64"/>
<dbReference type="STRING" id="214092.YPO3158"/>
<dbReference type="PaxDb" id="214092-YPO3158"/>
<dbReference type="EnsemblBacteria" id="AAS61038">
    <property type="protein sequence ID" value="AAS61038"/>
    <property type="gene ID" value="YP_0773"/>
</dbReference>
<dbReference type="GeneID" id="57975553"/>
<dbReference type="KEGG" id="ype:YPO3158"/>
<dbReference type="KEGG" id="ypk:y1026"/>
<dbReference type="KEGG" id="ypm:YP_0773"/>
<dbReference type="PATRIC" id="fig|214092.21.peg.3615"/>
<dbReference type="eggNOG" id="COG0544">
    <property type="taxonomic scope" value="Bacteria"/>
</dbReference>
<dbReference type="HOGENOM" id="CLU_033058_2_0_6"/>
<dbReference type="OMA" id="KGIKTQF"/>
<dbReference type="OrthoDB" id="9767721at2"/>
<dbReference type="Proteomes" id="UP000000815">
    <property type="component" value="Chromosome"/>
</dbReference>
<dbReference type="Proteomes" id="UP000001019">
    <property type="component" value="Chromosome"/>
</dbReference>
<dbReference type="Proteomes" id="UP000002490">
    <property type="component" value="Chromosome"/>
</dbReference>
<dbReference type="GO" id="GO:0005737">
    <property type="term" value="C:cytoplasm"/>
    <property type="evidence" value="ECO:0007669"/>
    <property type="project" value="UniProtKB-SubCell"/>
</dbReference>
<dbReference type="GO" id="GO:0003755">
    <property type="term" value="F:peptidyl-prolyl cis-trans isomerase activity"/>
    <property type="evidence" value="ECO:0000318"/>
    <property type="project" value="GO_Central"/>
</dbReference>
<dbReference type="GO" id="GO:0044183">
    <property type="term" value="F:protein folding chaperone"/>
    <property type="evidence" value="ECO:0000318"/>
    <property type="project" value="GO_Central"/>
</dbReference>
<dbReference type="GO" id="GO:0043022">
    <property type="term" value="F:ribosome binding"/>
    <property type="evidence" value="ECO:0000318"/>
    <property type="project" value="GO_Central"/>
</dbReference>
<dbReference type="GO" id="GO:0051083">
    <property type="term" value="P:'de novo' cotranslational protein folding"/>
    <property type="evidence" value="ECO:0000318"/>
    <property type="project" value="GO_Central"/>
</dbReference>
<dbReference type="GO" id="GO:0051301">
    <property type="term" value="P:cell division"/>
    <property type="evidence" value="ECO:0007669"/>
    <property type="project" value="UniProtKB-KW"/>
</dbReference>
<dbReference type="GO" id="GO:0061077">
    <property type="term" value="P:chaperone-mediated protein folding"/>
    <property type="evidence" value="ECO:0000318"/>
    <property type="project" value="GO_Central"/>
</dbReference>
<dbReference type="GO" id="GO:0015031">
    <property type="term" value="P:protein transport"/>
    <property type="evidence" value="ECO:0007669"/>
    <property type="project" value="UniProtKB-UniRule"/>
</dbReference>
<dbReference type="GO" id="GO:0043335">
    <property type="term" value="P:protein unfolding"/>
    <property type="evidence" value="ECO:0000318"/>
    <property type="project" value="GO_Central"/>
</dbReference>
<dbReference type="FunFam" id="1.10.3120.10:FF:000001">
    <property type="entry name" value="Trigger factor"/>
    <property type="match status" value="1"/>
</dbReference>
<dbReference type="FunFam" id="3.10.50.40:FF:000001">
    <property type="entry name" value="Trigger factor"/>
    <property type="match status" value="1"/>
</dbReference>
<dbReference type="FunFam" id="3.30.70.1050:FF:000001">
    <property type="entry name" value="Trigger factor"/>
    <property type="match status" value="1"/>
</dbReference>
<dbReference type="Gene3D" id="3.10.50.40">
    <property type="match status" value="1"/>
</dbReference>
<dbReference type="Gene3D" id="3.30.70.1050">
    <property type="entry name" value="Trigger factor ribosome-binding domain"/>
    <property type="match status" value="1"/>
</dbReference>
<dbReference type="Gene3D" id="1.10.3120.10">
    <property type="entry name" value="Trigger factor, C-terminal domain"/>
    <property type="match status" value="1"/>
</dbReference>
<dbReference type="HAMAP" id="MF_00303">
    <property type="entry name" value="Trigger_factor_Tig"/>
    <property type="match status" value="1"/>
</dbReference>
<dbReference type="InterPro" id="IPR046357">
    <property type="entry name" value="PPIase_dom_sf"/>
</dbReference>
<dbReference type="InterPro" id="IPR001179">
    <property type="entry name" value="PPIase_FKBP_dom"/>
</dbReference>
<dbReference type="InterPro" id="IPR005215">
    <property type="entry name" value="Trig_fac"/>
</dbReference>
<dbReference type="InterPro" id="IPR008880">
    <property type="entry name" value="Trigger_fac_C"/>
</dbReference>
<dbReference type="InterPro" id="IPR037041">
    <property type="entry name" value="Trigger_fac_C_sf"/>
</dbReference>
<dbReference type="InterPro" id="IPR008881">
    <property type="entry name" value="Trigger_fac_ribosome-bd_bac"/>
</dbReference>
<dbReference type="InterPro" id="IPR036611">
    <property type="entry name" value="Trigger_fac_ribosome-bd_sf"/>
</dbReference>
<dbReference type="InterPro" id="IPR027304">
    <property type="entry name" value="Trigger_fact/SurA_dom_sf"/>
</dbReference>
<dbReference type="NCBIfam" id="TIGR00115">
    <property type="entry name" value="tig"/>
    <property type="match status" value="1"/>
</dbReference>
<dbReference type="PANTHER" id="PTHR30560">
    <property type="entry name" value="TRIGGER FACTOR CHAPERONE AND PEPTIDYL-PROLYL CIS/TRANS ISOMERASE"/>
    <property type="match status" value="1"/>
</dbReference>
<dbReference type="PANTHER" id="PTHR30560:SF3">
    <property type="entry name" value="TRIGGER FACTOR-LIKE PROTEIN TIG, CHLOROPLASTIC"/>
    <property type="match status" value="1"/>
</dbReference>
<dbReference type="Pfam" id="PF00254">
    <property type="entry name" value="FKBP_C"/>
    <property type="match status" value="1"/>
</dbReference>
<dbReference type="Pfam" id="PF05698">
    <property type="entry name" value="Trigger_C"/>
    <property type="match status" value="1"/>
</dbReference>
<dbReference type="Pfam" id="PF05697">
    <property type="entry name" value="Trigger_N"/>
    <property type="match status" value="1"/>
</dbReference>
<dbReference type="PIRSF" id="PIRSF003095">
    <property type="entry name" value="Trigger_factor"/>
    <property type="match status" value="1"/>
</dbReference>
<dbReference type="SUPFAM" id="SSF54534">
    <property type="entry name" value="FKBP-like"/>
    <property type="match status" value="1"/>
</dbReference>
<dbReference type="SUPFAM" id="SSF109998">
    <property type="entry name" value="Triger factor/SurA peptide-binding domain-like"/>
    <property type="match status" value="1"/>
</dbReference>
<dbReference type="SUPFAM" id="SSF102735">
    <property type="entry name" value="Trigger factor ribosome-binding domain"/>
    <property type="match status" value="1"/>
</dbReference>
<dbReference type="PROSITE" id="PS50059">
    <property type="entry name" value="FKBP_PPIASE"/>
    <property type="match status" value="1"/>
</dbReference>
<gene>
    <name evidence="1" type="primary">tig</name>
    <name type="ordered locus">YPO3158</name>
    <name type="ordered locus">y1026</name>
    <name type="ordered locus">YP_0773</name>
</gene>
<feature type="chain" id="PRO_0000179470" description="Trigger factor">
    <location>
        <begin position="1"/>
        <end position="434"/>
    </location>
</feature>
<feature type="domain" description="PPIase FKBP-type" evidence="1">
    <location>
        <begin position="161"/>
        <end position="246"/>
    </location>
</feature>